<gene>
    <name type="ordered locus">FRAAL6027</name>
</gene>
<organism>
    <name type="scientific">Frankia alni (strain DSM 45986 / CECT 9034 / ACN14a)</name>
    <dbReference type="NCBI Taxonomy" id="326424"/>
    <lineage>
        <taxon>Bacteria</taxon>
        <taxon>Bacillati</taxon>
        <taxon>Actinomycetota</taxon>
        <taxon>Actinomycetes</taxon>
        <taxon>Frankiales</taxon>
        <taxon>Frankiaceae</taxon>
        <taxon>Frankia</taxon>
    </lineage>
</organism>
<evidence type="ECO:0000255" key="1">
    <source>
        <dbReference type="HAMAP-Rule" id="MF_01600"/>
    </source>
</evidence>
<evidence type="ECO:0000256" key="2">
    <source>
        <dbReference type="SAM" id="MobiDB-lite"/>
    </source>
</evidence>
<proteinExistence type="inferred from homology"/>
<feature type="chain" id="PRO_0000291279" description="UPF0182 protein FRAAL6027">
    <location>
        <begin position="1"/>
        <end position="1026"/>
    </location>
</feature>
<feature type="transmembrane region" description="Helical" evidence="1">
    <location>
        <begin position="13"/>
        <end position="33"/>
    </location>
</feature>
<feature type="transmembrane region" description="Helical" evidence="1">
    <location>
        <begin position="60"/>
        <end position="80"/>
    </location>
</feature>
<feature type="transmembrane region" description="Helical" evidence="1">
    <location>
        <begin position="108"/>
        <end position="128"/>
    </location>
</feature>
<feature type="transmembrane region" description="Helical" evidence="1">
    <location>
        <begin position="167"/>
        <end position="187"/>
    </location>
</feature>
<feature type="transmembrane region" description="Helical" evidence="1">
    <location>
        <begin position="208"/>
        <end position="228"/>
    </location>
</feature>
<feature type="transmembrane region" description="Helical" evidence="1">
    <location>
        <begin position="250"/>
        <end position="270"/>
    </location>
</feature>
<feature type="transmembrane region" description="Helical" evidence="1">
    <location>
        <begin position="283"/>
        <end position="303"/>
    </location>
</feature>
<feature type="region of interest" description="Disordered" evidence="2">
    <location>
        <begin position="877"/>
        <end position="916"/>
    </location>
</feature>
<feature type="region of interest" description="Disordered" evidence="2">
    <location>
        <begin position="958"/>
        <end position="1026"/>
    </location>
</feature>
<feature type="compositionally biased region" description="Low complexity" evidence="2">
    <location>
        <begin position="877"/>
        <end position="888"/>
    </location>
</feature>
<feature type="compositionally biased region" description="Gly residues" evidence="2">
    <location>
        <begin position="889"/>
        <end position="903"/>
    </location>
</feature>
<feature type="compositionally biased region" description="Low complexity" evidence="2">
    <location>
        <begin position="970"/>
        <end position="1001"/>
    </location>
</feature>
<feature type="compositionally biased region" description="Pro residues" evidence="2">
    <location>
        <begin position="1016"/>
        <end position="1026"/>
    </location>
</feature>
<name>Y6027_FRAAA</name>
<dbReference type="EMBL" id="CT573213">
    <property type="protein sequence ID" value="CAJ64651.1"/>
    <property type="molecule type" value="Genomic_DNA"/>
</dbReference>
<dbReference type="RefSeq" id="WP_011607079.1">
    <property type="nucleotide sequence ID" value="NC_008278.1"/>
</dbReference>
<dbReference type="SMR" id="Q0RD23"/>
<dbReference type="STRING" id="326424.FRAAL6027"/>
<dbReference type="KEGG" id="fal:FRAAL6027"/>
<dbReference type="eggNOG" id="COG1615">
    <property type="taxonomic scope" value="Bacteria"/>
</dbReference>
<dbReference type="HOGENOM" id="CLU_007733_1_0_11"/>
<dbReference type="OrthoDB" id="9763654at2"/>
<dbReference type="Proteomes" id="UP000000657">
    <property type="component" value="Chromosome"/>
</dbReference>
<dbReference type="GO" id="GO:0005576">
    <property type="term" value="C:extracellular region"/>
    <property type="evidence" value="ECO:0007669"/>
    <property type="project" value="TreeGrafter"/>
</dbReference>
<dbReference type="GO" id="GO:0005886">
    <property type="term" value="C:plasma membrane"/>
    <property type="evidence" value="ECO:0007669"/>
    <property type="project" value="UniProtKB-SubCell"/>
</dbReference>
<dbReference type="HAMAP" id="MF_01600">
    <property type="entry name" value="UPF0182"/>
    <property type="match status" value="1"/>
</dbReference>
<dbReference type="InterPro" id="IPR005372">
    <property type="entry name" value="UPF0182"/>
</dbReference>
<dbReference type="NCBIfam" id="NF000825">
    <property type="entry name" value="PRK00068.1"/>
    <property type="match status" value="1"/>
</dbReference>
<dbReference type="PANTHER" id="PTHR39344">
    <property type="entry name" value="UPF0182 PROTEIN SLL1060"/>
    <property type="match status" value="1"/>
</dbReference>
<dbReference type="PANTHER" id="PTHR39344:SF1">
    <property type="entry name" value="UPF0182 PROTEIN SLL1060"/>
    <property type="match status" value="1"/>
</dbReference>
<dbReference type="Pfam" id="PF03699">
    <property type="entry name" value="UPF0182"/>
    <property type="match status" value="1"/>
</dbReference>
<comment type="subcellular location">
    <subcellularLocation>
        <location evidence="1">Cell membrane</location>
        <topology evidence="1">Multi-pass membrane protein</topology>
    </subcellularLocation>
</comment>
<comment type="similarity">
    <text evidence="1">Belongs to the UPF0182 family.</text>
</comment>
<keyword id="KW-1003">Cell membrane</keyword>
<keyword id="KW-0472">Membrane</keyword>
<keyword id="KW-1185">Reference proteome</keyword>
<keyword id="KW-0812">Transmembrane</keyword>
<keyword id="KW-1133">Transmembrane helix</keyword>
<sequence length="1026" mass="110178">MATTSRRPVLTRAKVIVPVLLAVALVIAFVAIFTRLYTDLLFYRSVDFSKVFTTVIYTRILLFLIFGAVMAVVIGTNIVLGYRFRPQLRPLSTEQQNLERYRSAIEPYMKLVLVAVAAVFGLAAGLSASGRWRTWLLWVNGESFGTKDPQFHRDISYYAFTYPFQRFLLGFLLTAVLLSLLVTVLTHYLFGGIRLQTPGERVTPAAKAHISVLLGLLALLKAWAYYLDRFGSVFSSRGVATGASYTDVHAVLPAKLILLFISLACAVLFIYNIFQRGWTLPLLGAGILVLSSVVIGGIYPAFIQQFQVRPNEATREQPYIERNIAATRAAYGIQNVKPQSYAARTDVTAAQVAADTGTVPNTRLLDPSKLSRTFQQLQQIRGYYTFPKTLDVDRYTVTGADKKQTTRDYVVSVRELNQAGLGADQRNWINEHLTYTHGKGFVAAPSNTVDEGQPAFDEGEQNLPQKGDFDVRENRVYFGEMSPNYSVVGTRQVEIDGPGPGADTQVTTTYTGDGGVSIGSTFRQALFALRFGEKNLLLSGDITKNSRILYERNPRDRVSKAAPWLTLDGDPYPAVVNGRITWILDGYTTSDGYPYSARRTLGDVTADSVTAQSGNRARQAANQVNYIRNSVKATVDAYDGTVTLYAWDESDPVLRTWMKAFPDTVKPKKDISPSLMAHLRYPEDLFKVQRDLIGQYHVSDPRDFYSQEDFWQVSESPDGSGQPQPPFYVYSKLPDRSGPSYNLTSPLISARSSKLAAYMAVSSDPSNYGQFTLLKLPPGGTINGPVQVQNAIESNGDVANKLTLWRGAGSQTIEGNLLTLPVAGGLLYVEPYYVQARGGSGYPTLQGIATAFGERIGFGTSLGEALDKVFGSGAGAAAAGAGTGATTTTGGGGQATTQGGGTGAAPPGGTSGLQDAVNDADSAYKAGQDALRKNPPDFNAYGQAQTDLADALSRLRTLASPPTTPPAASPTPSRSAAPTTRGTAAGSAPPGTTPAVAAPAGPSGPPSPAGATAGPPQQPRAAPPPG</sequence>
<accession>Q0RD23</accession>
<reference key="1">
    <citation type="journal article" date="2007" name="Genome Res.">
        <title>Genome characteristics of facultatively symbiotic Frankia sp. strains reflect host range and host plant biogeography.</title>
        <authorList>
            <person name="Normand P."/>
            <person name="Lapierre P."/>
            <person name="Tisa L.S."/>
            <person name="Gogarten J.P."/>
            <person name="Alloisio N."/>
            <person name="Bagnarol E."/>
            <person name="Bassi C.A."/>
            <person name="Berry A.M."/>
            <person name="Bickhart D.M."/>
            <person name="Choisne N."/>
            <person name="Couloux A."/>
            <person name="Cournoyer B."/>
            <person name="Cruveiller S."/>
            <person name="Daubin V."/>
            <person name="Demange N."/>
            <person name="Francino M.P."/>
            <person name="Goltsman E."/>
            <person name="Huang Y."/>
            <person name="Kopp O.R."/>
            <person name="Labarre L."/>
            <person name="Lapidus A."/>
            <person name="Lavire C."/>
            <person name="Marechal J."/>
            <person name="Martinez M."/>
            <person name="Mastronunzio J.E."/>
            <person name="Mullin B.C."/>
            <person name="Niemann J."/>
            <person name="Pujic P."/>
            <person name="Rawnsley T."/>
            <person name="Rouy Z."/>
            <person name="Schenowitz C."/>
            <person name="Sellstedt A."/>
            <person name="Tavares F."/>
            <person name="Tomkins J.P."/>
            <person name="Vallenet D."/>
            <person name="Valverde C."/>
            <person name="Wall L.G."/>
            <person name="Wang Y."/>
            <person name="Medigue C."/>
            <person name="Benson D.R."/>
        </authorList>
    </citation>
    <scope>NUCLEOTIDE SEQUENCE [LARGE SCALE GENOMIC DNA]</scope>
    <source>
        <strain>DSM 45986 / CECT 9034 / ACN14a</strain>
    </source>
</reference>
<protein>
    <recommendedName>
        <fullName evidence="1">UPF0182 protein FRAAL6027</fullName>
    </recommendedName>
</protein>